<organism>
    <name type="scientific">Bacillus cereus (strain ATCC 10987 / NRS 248)</name>
    <dbReference type="NCBI Taxonomy" id="222523"/>
    <lineage>
        <taxon>Bacteria</taxon>
        <taxon>Bacillati</taxon>
        <taxon>Bacillota</taxon>
        <taxon>Bacilli</taxon>
        <taxon>Bacillales</taxon>
        <taxon>Bacillaceae</taxon>
        <taxon>Bacillus</taxon>
        <taxon>Bacillus cereus group</taxon>
    </lineage>
</organism>
<dbReference type="EC" id="2.4.1.315"/>
<dbReference type="EMBL" id="AE017194">
    <property type="protein sequence ID" value="AAS39500.1"/>
    <property type="molecule type" value="Genomic_DNA"/>
</dbReference>
<dbReference type="SMR" id="Q73DZ5"/>
<dbReference type="CAZy" id="GT28">
    <property type="family name" value="Glycosyltransferase Family 28"/>
</dbReference>
<dbReference type="KEGG" id="bca:BCE_0565"/>
<dbReference type="HOGENOM" id="CLU_028367_0_1_9"/>
<dbReference type="UniPathway" id="UPA00894"/>
<dbReference type="Proteomes" id="UP000002527">
    <property type="component" value="Chromosome"/>
</dbReference>
<dbReference type="GO" id="GO:0005886">
    <property type="term" value="C:plasma membrane"/>
    <property type="evidence" value="ECO:0007669"/>
    <property type="project" value="UniProtKB-SubCell"/>
</dbReference>
<dbReference type="GO" id="GO:0047228">
    <property type="term" value="F:1,2-diacylglycerol 3-glucosyltransferase activity"/>
    <property type="evidence" value="ECO:0007669"/>
    <property type="project" value="UniProtKB-UniRule"/>
</dbReference>
<dbReference type="GO" id="GO:0009246">
    <property type="term" value="P:enterobacterial common antigen biosynthetic process"/>
    <property type="evidence" value="ECO:0007669"/>
    <property type="project" value="UniProtKB-UniPathway"/>
</dbReference>
<dbReference type="GO" id="GO:0009247">
    <property type="term" value="P:glycolipid biosynthetic process"/>
    <property type="evidence" value="ECO:0007669"/>
    <property type="project" value="UniProtKB-UniRule"/>
</dbReference>
<dbReference type="GO" id="GO:0070395">
    <property type="term" value="P:lipoteichoic acid biosynthetic process"/>
    <property type="evidence" value="ECO:0007669"/>
    <property type="project" value="UniProtKB-UniRule"/>
</dbReference>
<dbReference type="CDD" id="cd17507">
    <property type="entry name" value="GT28_Beta-DGS-like"/>
    <property type="match status" value="1"/>
</dbReference>
<dbReference type="Gene3D" id="3.40.50.2000">
    <property type="entry name" value="Glycogen Phosphorylase B"/>
    <property type="match status" value="1"/>
</dbReference>
<dbReference type="HAMAP" id="MF_01280">
    <property type="entry name" value="Diacylglyc_glucosyltr"/>
    <property type="match status" value="1"/>
</dbReference>
<dbReference type="InterPro" id="IPR009695">
    <property type="entry name" value="Diacylglyc_glucosyltr_N"/>
</dbReference>
<dbReference type="InterPro" id="IPR007235">
    <property type="entry name" value="Glyco_trans_28_C"/>
</dbReference>
<dbReference type="InterPro" id="IPR050519">
    <property type="entry name" value="Glycosyltransf_28_UgtP"/>
</dbReference>
<dbReference type="InterPro" id="IPR023589">
    <property type="entry name" value="Pro_diacylglycrl_glcsylTrfase"/>
</dbReference>
<dbReference type="NCBIfam" id="NF010135">
    <property type="entry name" value="PRK13609.1"/>
    <property type="match status" value="1"/>
</dbReference>
<dbReference type="PANTHER" id="PTHR43025">
    <property type="entry name" value="MONOGALACTOSYLDIACYLGLYCEROL SYNTHASE"/>
    <property type="match status" value="1"/>
</dbReference>
<dbReference type="PANTHER" id="PTHR43025:SF3">
    <property type="entry name" value="MONOGALACTOSYLDIACYLGLYCEROL SYNTHASE 1, CHLOROPLASTIC"/>
    <property type="match status" value="1"/>
</dbReference>
<dbReference type="Pfam" id="PF04101">
    <property type="entry name" value="Glyco_tran_28_C"/>
    <property type="match status" value="1"/>
</dbReference>
<dbReference type="Pfam" id="PF06925">
    <property type="entry name" value="MGDG_synth"/>
    <property type="match status" value="1"/>
</dbReference>
<dbReference type="SUPFAM" id="SSF53756">
    <property type="entry name" value="UDP-Glycosyltransferase/glycogen phosphorylase"/>
    <property type="match status" value="1"/>
</dbReference>
<evidence type="ECO:0000255" key="1">
    <source>
        <dbReference type="HAMAP-Rule" id="MF_01280"/>
    </source>
</evidence>
<comment type="function">
    <text evidence="1">Processive glucosyltransferase involved in the biosynthesis of both the bilayer- and non-bilayer-forming membrane glucolipids. Is able to successively transfer up to three glucosyl residues to diacylglycerol (DAG), thereby catalyzing the formation of beta-monoglucosyl-DAG (3-O-(beta-D-glucopyranosyl)-1,2-diacyl-sn-glycerol), beta-diglucosyl-DAG (3-O-(beta-D-glucopyranosyl-beta-(1-&gt;6)-D-glucopyranosyl)-1,2-diacyl-sn-glycerol) and beta-triglucosyl-DAG (3-O-(beta-D-glucopyranosyl-beta-(1-&gt;6)-D-glucopyranosyl-beta-(1-&gt;6)-D-glucopyranosyl)-1,2-diacyl-sn-glycerol). Beta-diglucosyl-DAG is the predominant glycolipid found in Bacillales and is also used as a membrane anchor for lipoteichoic acid (LTA).</text>
</comment>
<comment type="catalytic activity">
    <reaction>
        <text>a 1,2-diacyl-3-O-(beta-D-glucopyranosyl)-sn-glycerol + UDP-alpha-D-glucose = a 1,2-diacyl-3-O-(beta-D-Glc-(1-&gt;6)-beta-D-Glc)-sn-glycerol + UDP + H(+)</text>
        <dbReference type="Rhea" id="RHEA:39031"/>
        <dbReference type="ChEBI" id="CHEBI:15378"/>
        <dbReference type="ChEBI" id="CHEBI:58223"/>
        <dbReference type="ChEBI" id="CHEBI:58885"/>
        <dbReference type="ChEBI" id="CHEBI:75799"/>
        <dbReference type="ChEBI" id="CHEBI:76264"/>
        <dbReference type="EC" id="2.4.1.315"/>
    </reaction>
</comment>
<comment type="catalytic activity">
    <reaction>
        <text>a 1,2-diacyl-3-O-(beta-D-Glc-(1-&gt;6)-beta-D-Glc)-sn-glycerol + UDP-alpha-D-glucose = a 1,2-diacyl-3-O-(beta-D-Glc-(1-&gt;6)-beta-D-Glc-(1-&gt;6)-beta-D-Glc)-sn-glycerol + UDP + H(+)</text>
        <dbReference type="Rhea" id="RHEA:39027"/>
        <dbReference type="ChEBI" id="CHEBI:15378"/>
        <dbReference type="ChEBI" id="CHEBI:58223"/>
        <dbReference type="ChEBI" id="CHEBI:58885"/>
        <dbReference type="ChEBI" id="CHEBI:76264"/>
        <dbReference type="ChEBI" id="CHEBI:76265"/>
        <dbReference type="EC" id="2.4.1.315"/>
    </reaction>
</comment>
<comment type="catalytic activity">
    <reaction evidence="1">
        <text>a 1,2-diacyl-sn-glycerol + UDP-alpha-D-glucose = a 1,2-diacyl-3-O-(beta-D-glucopyranosyl)-sn-glycerol + UDP + H(+)</text>
        <dbReference type="Rhea" id="RHEA:17285"/>
        <dbReference type="ChEBI" id="CHEBI:15378"/>
        <dbReference type="ChEBI" id="CHEBI:17815"/>
        <dbReference type="ChEBI" id="CHEBI:58223"/>
        <dbReference type="ChEBI" id="CHEBI:58885"/>
        <dbReference type="ChEBI" id="CHEBI:75799"/>
    </reaction>
</comment>
<comment type="pathway">
    <text evidence="1">Glycolipid metabolism; diglucosyl-diacylglycerol biosynthesis.</text>
</comment>
<comment type="subcellular location">
    <subcellularLocation>
        <location evidence="1">Cell membrane</location>
    </subcellularLocation>
</comment>
<comment type="similarity">
    <text evidence="1">Belongs to the glycosyltransferase 28 family. UgtP subfamily.</text>
</comment>
<name>UGTP_BACC1</name>
<accession>Q73DZ5</accession>
<proteinExistence type="inferred from homology"/>
<keyword id="KW-0119">Carbohydrate metabolism</keyword>
<keyword id="KW-1003">Cell membrane</keyword>
<keyword id="KW-0328">Glycosyltransferase</keyword>
<keyword id="KW-0444">Lipid biosynthesis</keyword>
<keyword id="KW-0443">Lipid metabolism</keyword>
<keyword id="KW-0472">Membrane</keyword>
<keyword id="KW-0808">Transferase</keyword>
<protein>
    <recommendedName>
        <fullName evidence="1">Processive diacylglycerol beta-glucosyltransferase</fullName>
        <ecNumber>2.4.1.315</ecNumber>
    </recommendedName>
    <alternativeName>
        <fullName evidence="1">Beta-diglucosyldiacylglycerol synthase</fullName>
        <shortName evidence="1">Beta-DGS</shortName>
        <shortName evidence="1">DGlcDAG synthase</shortName>
        <shortName evidence="1">Glc2-DAG synthase</shortName>
    </alternativeName>
    <alternativeName>
        <fullName evidence="1">Beta-gentiobiosyldiacylglycerol synthase</fullName>
    </alternativeName>
    <alternativeName>
        <fullName evidence="1">Beta-monoglucosyldiacylglycerol synthase</fullName>
        <shortName evidence="1">Beta-MGS</shortName>
        <shortName evidence="1">MGlcDAG synthase</shortName>
    </alternativeName>
    <alternativeName>
        <fullName evidence="1">Beta-triglucosyldiacylglycerol synthase</fullName>
        <shortName evidence="1">TGlcDAG synthase</shortName>
    </alternativeName>
    <alternativeName>
        <fullName>Diglucosyl diacylglycerol synthase (1,6-linking)</fullName>
    </alternativeName>
    <alternativeName>
        <fullName evidence="1">Glucosyl-beta-1,6-glucosyldiacylglycerol synthase</fullName>
    </alternativeName>
    <alternativeName>
        <fullName evidence="1">UDP glucosyltransferase</fullName>
    </alternativeName>
    <alternativeName>
        <fullName evidence="1">UDP-glucose:1,2-diacylglycerol-3-beta-D-glucosyltransferase</fullName>
    </alternativeName>
</protein>
<sequence>MIKNPKVLILTAHYGNGHVQVAKTLEQTFRQKGIKDVIVCDLFGESHPVITDITKYLYLKSYTIGKELYRLFYYGVEKIYDKKIASWYANFGRKRLKLLLQAEKPDIVINTFPIIAVPELKKQTGISIPVYNVLTDFCVHKIWIHREVDRYFVATDHVKKVMVDIGVPAEQIVETGIPIRSSFELKINSDIIYNKYQLCKNKKILLIVAGAHGVLGSVKELCQSFMSVPDLQVVVVCGKNEALKQDLLGLQEKNPDALKVFGYVENIDELFRVTSCMITKPGGITLSEAAALQVPVILYKPVPGQENENAMYFERKGAAVVIRDDSEVFAKTEALLQDDMKLLQMKEAMKSIYRPEPADHIVDTILAENHVEPNHIPIKSPALAQSFT</sequence>
<feature type="chain" id="PRO_0000308448" description="Processive diacylglycerol beta-glucosyltransferase">
    <location>
        <begin position="1"/>
        <end position="388"/>
    </location>
</feature>
<gene>
    <name evidence="1" type="primary">ugtP</name>
    <name type="ordered locus">BCE_0565</name>
</gene>
<reference key="1">
    <citation type="journal article" date="2004" name="Nucleic Acids Res.">
        <title>The genome sequence of Bacillus cereus ATCC 10987 reveals metabolic adaptations and a large plasmid related to Bacillus anthracis pXO1.</title>
        <authorList>
            <person name="Rasko D.A."/>
            <person name="Ravel J."/>
            <person name="Oekstad O.A."/>
            <person name="Helgason E."/>
            <person name="Cer R.Z."/>
            <person name="Jiang L."/>
            <person name="Shores K.A."/>
            <person name="Fouts D.E."/>
            <person name="Tourasse N.J."/>
            <person name="Angiuoli S.V."/>
            <person name="Kolonay J.F."/>
            <person name="Nelson W.C."/>
            <person name="Kolstoe A.-B."/>
            <person name="Fraser C.M."/>
            <person name="Read T.D."/>
        </authorList>
    </citation>
    <scope>NUCLEOTIDE SEQUENCE [LARGE SCALE GENOMIC DNA]</scope>
    <source>
        <strain>ATCC 10987 / NRS 248</strain>
    </source>
</reference>